<comment type="function">
    <text evidence="1">Required for insertion of 4Fe-4S clusters.</text>
</comment>
<comment type="cofactor">
    <cofactor evidence="1">
        <name>iron-sulfur cluster</name>
        <dbReference type="ChEBI" id="CHEBI:30408"/>
    </cofactor>
    <text evidence="1">Binds 1 iron-sulfur cluster per subunit.</text>
</comment>
<comment type="subunit">
    <text evidence="1">Homodimer.</text>
</comment>
<comment type="similarity">
    <text evidence="1">Belongs to the HesB/IscA family.</text>
</comment>
<gene>
    <name evidence="1" type="primary">erpA2</name>
    <name type="ordered locus">Bcep1808_5991</name>
</gene>
<evidence type="ECO:0000255" key="1">
    <source>
        <dbReference type="HAMAP-Rule" id="MF_01380"/>
    </source>
</evidence>
<proteinExistence type="inferred from homology"/>
<organism>
    <name type="scientific">Burkholderia vietnamiensis (strain G4 / LMG 22486)</name>
    <name type="common">Burkholderia cepacia (strain R1808)</name>
    <dbReference type="NCBI Taxonomy" id="269482"/>
    <lineage>
        <taxon>Bacteria</taxon>
        <taxon>Pseudomonadati</taxon>
        <taxon>Pseudomonadota</taxon>
        <taxon>Betaproteobacteria</taxon>
        <taxon>Burkholderiales</taxon>
        <taxon>Burkholderiaceae</taxon>
        <taxon>Burkholderia</taxon>
        <taxon>Burkholderia cepacia complex</taxon>
    </lineage>
</organism>
<reference key="1">
    <citation type="submission" date="2007-03" db="EMBL/GenBank/DDBJ databases">
        <title>Complete sequence of chromosome 3 of Burkholderia vietnamiensis G4.</title>
        <authorList>
            <consortium name="US DOE Joint Genome Institute"/>
            <person name="Copeland A."/>
            <person name="Lucas S."/>
            <person name="Lapidus A."/>
            <person name="Barry K."/>
            <person name="Detter J.C."/>
            <person name="Glavina del Rio T."/>
            <person name="Hammon N."/>
            <person name="Israni S."/>
            <person name="Dalin E."/>
            <person name="Tice H."/>
            <person name="Pitluck S."/>
            <person name="Chain P."/>
            <person name="Malfatti S."/>
            <person name="Shin M."/>
            <person name="Vergez L."/>
            <person name="Schmutz J."/>
            <person name="Larimer F."/>
            <person name="Land M."/>
            <person name="Hauser L."/>
            <person name="Kyrpides N."/>
            <person name="Tiedje J."/>
            <person name="Richardson P."/>
        </authorList>
    </citation>
    <scope>NUCLEOTIDE SEQUENCE [LARGE SCALE GENOMIC DNA]</scope>
    <source>
        <strain>G4 / LMG 22486</strain>
    </source>
</reference>
<feature type="chain" id="PRO_0000311468" description="Putative iron-sulfur cluster insertion protein ErpA 2">
    <location>
        <begin position="1"/>
        <end position="124"/>
    </location>
</feature>
<feature type="binding site" evidence="1">
    <location>
        <position position="52"/>
    </location>
    <ligand>
        <name>iron-sulfur cluster</name>
        <dbReference type="ChEBI" id="CHEBI:30408"/>
    </ligand>
</feature>
<feature type="binding site" evidence="1">
    <location>
        <position position="116"/>
    </location>
    <ligand>
        <name>iron-sulfur cluster</name>
        <dbReference type="ChEBI" id="CHEBI:30408"/>
    </ligand>
</feature>
<feature type="binding site" evidence="1">
    <location>
        <position position="118"/>
    </location>
    <ligand>
        <name>iron-sulfur cluster</name>
        <dbReference type="ChEBI" id="CHEBI:30408"/>
    </ligand>
</feature>
<dbReference type="EMBL" id="CP000616">
    <property type="protein sequence ID" value="ABO58916.1"/>
    <property type="molecule type" value="Genomic_DNA"/>
</dbReference>
<dbReference type="SMR" id="A4JRL3"/>
<dbReference type="KEGG" id="bvi:Bcep1808_5991"/>
<dbReference type="eggNOG" id="COG0316">
    <property type="taxonomic scope" value="Bacteria"/>
</dbReference>
<dbReference type="HOGENOM" id="CLU_069054_5_3_4"/>
<dbReference type="Proteomes" id="UP000002287">
    <property type="component" value="Chromosome 3"/>
</dbReference>
<dbReference type="GO" id="GO:0005829">
    <property type="term" value="C:cytosol"/>
    <property type="evidence" value="ECO:0007669"/>
    <property type="project" value="TreeGrafter"/>
</dbReference>
<dbReference type="GO" id="GO:0051537">
    <property type="term" value="F:2 iron, 2 sulfur cluster binding"/>
    <property type="evidence" value="ECO:0007669"/>
    <property type="project" value="TreeGrafter"/>
</dbReference>
<dbReference type="GO" id="GO:0051539">
    <property type="term" value="F:4 iron, 4 sulfur cluster binding"/>
    <property type="evidence" value="ECO:0007669"/>
    <property type="project" value="TreeGrafter"/>
</dbReference>
<dbReference type="GO" id="GO:0005506">
    <property type="term" value="F:iron ion binding"/>
    <property type="evidence" value="ECO:0007669"/>
    <property type="project" value="UniProtKB-UniRule"/>
</dbReference>
<dbReference type="GO" id="GO:0016226">
    <property type="term" value="P:iron-sulfur cluster assembly"/>
    <property type="evidence" value="ECO:0007669"/>
    <property type="project" value="UniProtKB-UniRule"/>
</dbReference>
<dbReference type="FunFam" id="2.60.300.12:FF:000002">
    <property type="entry name" value="Iron-sulfur cluster insertion protein ErpA"/>
    <property type="match status" value="1"/>
</dbReference>
<dbReference type="Gene3D" id="2.60.300.12">
    <property type="entry name" value="HesB-like domain"/>
    <property type="match status" value="1"/>
</dbReference>
<dbReference type="HAMAP" id="MF_01380">
    <property type="entry name" value="Fe_S_insert_ErpA"/>
    <property type="match status" value="1"/>
</dbReference>
<dbReference type="InterPro" id="IPR000361">
    <property type="entry name" value="FeS_biogenesis"/>
</dbReference>
<dbReference type="InterPro" id="IPR016092">
    <property type="entry name" value="FeS_cluster_insertion"/>
</dbReference>
<dbReference type="InterPro" id="IPR017870">
    <property type="entry name" value="FeS_cluster_insertion_CS"/>
</dbReference>
<dbReference type="InterPro" id="IPR023063">
    <property type="entry name" value="FeS_cluster_insertion_RrpA"/>
</dbReference>
<dbReference type="InterPro" id="IPR035903">
    <property type="entry name" value="HesB-like_dom_sf"/>
</dbReference>
<dbReference type="NCBIfam" id="TIGR00049">
    <property type="entry name" value="iron-sulfur cluster assembly accessory protein"/>
    <property type="match status" value="1"/>
</dbReference>
<dbReference type="NCBIfam" id="NF010147">
    <property type="entry name" value="PRK13623.1"/>
    <property type="match status" value="1"/>
</dbReference>
<dbReference type="PANTHER" id="PTHR43011">
    <property type="entry name" value="IRON-SULFUR CLUSTER ASSEMBLY 2 HOMOLOG, MITOCHONDRIAL"/>
    <property type="match status" value="1"/>
</dbReference>
<dbReference type="PANTHER" id="PTHR43011:SF1">
    <property type="entry name" value="IRON-SULFUR CLUSTER ASSEMBLY 2 HOMOLOG, MITOCHONDRIAL"/>
    <property type="match status" value="1"/>
</dbReference>
<dbReference type="Pfam" id="PF01521">
    <property type="entry name" value="Fe-S_biosyn"/>
    <property type="match status" value="1"/>
</dbReference>
<dbReference type="SUPFAM" id="SSF89360">
    <property type="entry name" value="HesB-like domain"/>
    <property type="match status" value="1"/>
</dbReference>
<dbReference type="PROSITE" id="PS01152">
    <property type="entry name" value="HESB"/>
    <property type="match status" value="1"/>
</dbReference>
<name>ERPA2_BURVG</name>
<accession>A4JRL3</accession>
<protein>
    <recommendedName>
        <fullName evidence="1">Putative iron-sulfur cluster insertion protein ErpA 2</fullName>
    </recommendedName>
</protein>
<sequence>MELLQPSADAAPVPLPAFLDFTPNAAAKVAALIDAEGNPQLKLRLYVSGGGCSGFQYGFAFDDQVADDDLQVVTDGVTLLIDAMSRQYLAGARVDYEDGLEGSRFVIQNPNAQSTCGCGSSFSV</sequence>
<keyword id="KW-0408">Iron</keyword>
<keyword id="KW-0411">Iron-sulfur</keyword>
<keyword id="KW-0479">Metal-binding</keyword>